<proteinExistence type="inferred from homology"/>
<reference key="1">
    <citation type="journal article" date="2003" name="Genome Res.">
        <title>Comparative complete genome sequence analysis of the amino acid replacements responsible for the thermostability of Corynebacterium efficiens.</title>
        <authorList>
            <person name="Nishio Y."/>
            <person name="Nakamura Y."/>
            <person name="Kawarabayasi Y."/>
            <person name="Usuda Y."/>
            <person name="Kimura E."/>
            <person name="Sugimoto S."/>
            <person name="Matsui K."/>
            <person name="Yamagishi A."/>
            <person name="Kikuchi H."/>
            <person name="Ikeo K."/>
            <person name="Gojobori T."/>
        </authorList>
    </citation>
    <scope>NUCLEOTIDE SEQUENCE [LARGE SCALE GENOMIC DNA]</scope>
    <source>
        <strain>DSM 44549 / YS-314 / AJ 12310 / JCM 11189 / NBRC 100395</strain>
    </source>
</reference>
<feature type="chain" id="PRO_1000015642" description="Elongation factor Tu">
    <location>
        <begin position="1"/>
        <end position="396"/>
    </location>
</feature>
<feature type="domain" description="tr-type G">
    <location>
        <begin position="10"/>
        <end position="205"/>
    </location>
</feature>
<feature type="region of interest" description="G1" evidence="1">
    <location>
        <begin position="19"/>
        <end position="26"/>
    </location>
</feature>
<feature type="region of interest" description="G2" evidence="1">
    <location>
        <begin position="62"/>
        <end position="66"/>
    </location>
</feature>
<feature type="region of interest" description="G3" evidence="1">
    <location>
        <begin position="83"/>
        <end position="86"/>
    </location>
</feature>
<feature type="region of interest" description="G4" evidence="1">
    <location>
        <begin position="138"/>
        <end position="141"/>
    </location>
</feature>
<feature type="region of interest" description="G5" evidence="1">
    <location>
        <begin position="175"/>
        <end position="177"/>
    </location>
</feature>
<feature type="binding site" evidence="2">
    <location>
        <begin position="19"/>
        <end position="26"/>
    </location>
    <ligand>
        <name>GTP</name>
        <dbReference type="ChEBI" id="CHEBI:37565"/>
    </ligand>
</feature>
<feature type="binding site" evidence="2">
    <location>
        <position position="26"/>
    </location>
    <ligand>
        <name>Mg(2+)</name>
        <dbReference type="ChEBI" id="CHEBI:18420"/>
    </ligand>
</feature>
<feature type="binding site" evidence="2">
    <location>
        <begin position="83"/>
        <end position="87"/>
    </location>
    <ligand>
        <name>GTP</name>
        <dbReference type="ChEBI" id="CHEBI:37565"/>
    </ligand>
</feature>
<feature type="binding site" evidence="2">
    <location>
        <begin position="138"/>
        <end position="141"/>
    </location>
    <ligand>
        <name>GTP</name>
        <dbReference type="ChEBI" id="CHEBI:37565"/>
    </ligand>
</feature>
<sequence>MAKAKFERTKPHVNIGTIGHVDHGKTTTTAAITKVLADAYPELNEAFAFDAIDKAPEEKERGITINISHVEYQTEKRHYAHVDAPGHADYIKNMITGAAQMDGAILVVAATDGPMPQTREHVLLARQVGVPYILVALNKCDMVDDEEIIELVEMEVRELLAEQDYDEDAPIVHISALKALEGDEKWAGQILELMQACDDNIPDPVRETDKPFLMPIEDIFTITGRGTVVTGRVERGTLNVNDDVEIIGIKEKATQTTVTGIEMFRKLLDSAEAGDNCGLLLRGIKREDVERGQVVVKPGAYTPHTEFEGSVYVLSKDEGGRHTPFFDNYRPQFYFRTTDVTGVVKLPEGVEMVMPGDNVDMSVTLIQPVAMDEGLRFAIREGSRTVGAGRVTKIIK</sequence>
<keyword id="KW-0963">Cytoplasm</keyword>
<keyword id="KW-0251">Elongation factor</keyword>
<keyword id="KW-0342">GTP-binding</keyword>
<keyword id="KW-0378">Hydrolase</keyword>
<keyword id="KW-0460">Magnesium</keyword>
<keyword id="KW-0479">Metal-binding</keyword>
<keyword id="KW-0547">Nucleotide-binding</keyword>
<keyword id="KW-0648">Protein biosynthesis</keyword>
<keyword id="KW-1185">Reference proteome</keyword>
<dbReference type="EC" id="3.6.5.3" evidence="2"/>
<dbReference type="EMBL" id="BA000035">
    <property type="protein sequence ID" value="BAC17327.1"/>
    <property type="molecule type" value="Genomic_DNA"/>
</dbReference>
<dbReference type="RefSeq" id="WP_006769810.1">
    <property type="nucleotide sequence ID" value="NC_004369.1"/>
</dbReference>
<dbReference type="SMR" id="Q8FS84"/>
<dbReference type="STRING" id="196164.gene:10740919"/>
<dbReference type="KEGG" id="cef:CE0517"/>
<dbReference type="eggNOG" id="COG0050">
    <property type="taxonomic scope" value="Bacteria"/>
</dbReference>
<dbReference type="HOGENOM" id="CLU_007265_0_1_11"/>
<dbReference type="OrthoDB" id="9803139at2"/>
<dbReference type="Proteomes" id="UP000001409">
    <property type="component" value="Chromosome"/>
</dbReference>
<dbReference type="GO" id="GO:0005829">
    <property type="term" value="C:cytosol"/>
    <property type="evidence" value="ECO:0007669"/>
    <property type="project" value="TreeGrafter"/>
</dbReference>
<dbReference type="GO" id="GO:0005525">
    <property type="term" value="F:GTP binding"/>
    <property type="evidence" value="ECO:0007669"/>
    <property type="project" value="UniProtKB-UniRule"/>
</dbReference>
<dbReference type="GO" id="GO:0003924">
    <property type="term" value="F:GTPase activity"/>
    <property type="evidence" value="ECO:0007669"/>
    <property type="project" value="InterPro"/>
</dbReference>
<dbReference type="GO" id="GO:0003746">
    <property type="term" value="F:translation elongation factor activity"/>
    <property type="evidence" value="ECO:0007669"/>
    <property type="project" value="UniProtKB-UniRule"/>
</dbReference>
<dbReference type="CDD" id="cd01884">
    <property type="entry name" value="EF_Tu"/>
    <property type="match status" value="1"/>
</dbReference>
<dbReference type="CDD" id="cd03697">
    <property type="entry name" value="EFTU_II"/>
    <property type="match status" value="1"/>
</dbReference>
<dbReference type="CDD" id="cd03707">
    <property type="entry name" value="EFTU_III"/>
    <property type="match status" value="1"/>
</dbReference>
<dbReference type="FunFam" id="2.40.30.10:FF:000001">
    <property type="entry name" value="Elongation factor Tu"/>
    <property type="match status" value="1"/>
</dbReference>
<dbReference type="FunFam" id="3.40.50.300:FF:000003">
    <property type="entry name" value="Elongation factor Tu"/>
    <property type="match status" value="1"/>
</dbReference>
<dbReference type="Gene3D" id="3.40.50.300">
    <property type="entry name" value="P-loop containing nucleotide triphosphate hydrolases"/>
    <property type="match status" value="1"/>
</dbReference>
<dbReference type="Gene3D" id="2.40.30.10">
    <property type="entry name" value="Translation factors"/>
    <property type="match status" value="2"/>
</dbReference>
<dbReference type="HAMAP" id="MF_00118_B">
    <property type="entry name" value="EF_Tu_B"/>
    <property type="match status" value="1"/>
</dbReference>
<dbReference type="InterPro" id="IPR041709">
    <property type="entry name" value="EF-Tu_GTP-bd"/>
</dbReference>
<dbReference type="InterPro" id="IPR050055">
    <property type="entry name" value="EF-Tu_GTPase"/>
</dbReference>
<dbReference type="InterPro" id="IPR004161">
    <property type="entry name" value="EFTu-like_2"/>
</dbReference>
<dbReference type="InterPro" id="IPR033720">
    <property type="entry name" value="EFTU_2"/>
</dbReference>
<dbReference type="InterPro" id="IPR031157">
    <property type="entry name" value="G_TR_CS"/>
</dbReference>
<dbReference type="InterPro" id="IPR027417">
    <property type="entry name" value="P-loop_NTPase"/>
</dbReference>
<dbReference type="InterPro" id="IPR005225">
    <property type="entry name" value="Small_GTP-bd"/>
</dbReference>
<dbReference type="InterPro" id="IPR000795">
    <property type="entry name" value="T_Tr_GTP-bd_dom"/>
</dbReference>
<dbReference type="InterPro" id="IPR009000">
    <property type="entry name" value="Transl_B-barrel_sf"/>
</dbReference>
<dbReference type="InterPro" id="IPR009001">
    <property type="entry name" value="Transl_elong_EF1A/Init_IF2_C"/>
</dbReference>
<dbReference type="InterPro" id="IPR004541">
    <property type="entry name" value="Transl_elong_EFTu/EF1A_bac/org"/>
</dbReference>
<dbReference type="InterPro" id="IPR004160">
    <property type="entry name" value="Transl_elong_EFTu/EF1A_C"/>
</dbReference>
<dbReference type="NCBIfam" id="TIGR00485">
    <property type="entry name" value="EF-Tu"/>
    <property type="match status" value="1"/>
</dbReference>
<dbReference type="NCBIfam" id="NF000766">
    <property type="entry name" value="PRK00049.1"/>
    <property type="match status" value="1"/>
</dbReference>
<dbReference type="NCBIfam" id="NF009372">
    <property type="entry name" value="PRK12735.1"/>
    <property type="match status" value="1"/>
</dbReference>
<dbReference type="NCBIfam" id="NF009373">
    <property type="entry name" value="PRK12736.1"/>
    <property type="match status" value="1"/>
</dbReference>
<dbReference type="NCBIfam" id="TIGR00231">
    <property type="entry name" value="small_GTP"/>
    <property type="match status" value="1"/>
</dbReference>
<dbReference type="PANTHER" id="PTHR43721:SF22">
    <property type="entry name" value="ELONGATION FACTOR TU, MITOCHONDRIAL"/>
    <property type="match status" value="1"/>
</dbReference>
<dbReference type="PANTHER" id="PTHR43721">
    <property type="entry name" value="ELONGATION FACTOR TU-RELATED"/>
    <property type="match status" value="1"/>
</dbReference>
<dbReference type="Pfam" id="PF00009">
    <property type="entry name" value="GTP_EFTU"/>
    <property type="match status" value="1"/>
</dbReference>
<dbReference type="Pfam" id="PF03144">
    <property type="entry name" value="GTP_EFTU_D2"/>
    <property type="match status" value="1"/>
</dbReference>
<dbReference type="Pfam" id="PF03143">
    <property type="entry name" value="GTP_EFTU_D3"/>
    <property type="match status" value="1"/>
</dbReference>
<dbReference type="PRINTS" id="PR00315">
    <property type="entry name" value="ELONGATNFCT"/>
</dbReference>
<dbReference type="SUPFAM" id="SSF50465">
    <property type="entry name" value="EF-Tu/eEF-1alpha/eIF2-gamma C-terminal domain"/>
    <property type="match status" value="1"/>
</dbReference>
<dbReference type="SUPFAM" id="SSF52540">
    <property type="entry name" value="P-loop containing nucleoside triphosphate hydrolases"/>
    <property type="match status" value="1"/>
</dbReference>
<dbReference type="SUPFAM" id="SSF50447">
    <property type="entry name" value="Translation proteins"/>
    <property type="match status" value="1"/>
</dbReference>
<dbReference type="PROSITE" id="PS00301">
    <property type="entry name" value="G_TR_1"/>
    <property type="match status" value="1"/>
</dbReference>
<dbReference type="PROSITE" id="PS51722">
    <property type="entry name" value="G_TR_2"/>
    <property type="match status" value="1"/>
</dbReference>
<evidence type="ECO:0000250" key="1"/>
<evidence type="ECO:0000255" key="2">
    <source>
        <dbReference type="HAMAP-Rule" id="MF_00118"/>
    </source>
</evidence>
<accession>Q8FS84</accession>
<name>EFTU_COREF</name>
<comment type="function">
    <text evidence="2">GTP hydrolase that promotes the GTP-dependent binding of aminoacyl-tRNA to the A-site of ribosomes during protein biosynthesis.</text>
</comment>
<comment type="catalytic activity">
    <reaction evidence="2">
        <text>GTP + H2O = GDP + phosphate + H(+)</text>
        <dbReference type="Rhea" id="RHEA:19669"/>
        <dbReference type="ChEBI" id="CHEBI:15377"/>
        <dbReference type="ChEBI" id="CHEBI:15378"/>
        <dbReference type="ChEBI" id="CHEBI:37565"/>
        <dbReference type="ChEBI" id="CHEBI:43474"/>
        <dbReference type="ChEBI" id="CHEBI:58189"/>
        <dbReference type="EC" id="3.6.5.3"/>
    </reaction>
    <physiologicalReaction direction="left-to-right" evidence="2">
        <dbReference type="Rhea" id="RHEA:19670"/>
    </physiologicalReaction>
</comment>
<comment type="subunit">
    <text evidence="2">Monomer.</text>
</comment>
<comment type="subcellular location">
    <subcellularLocation>
        <location evidence="2">Cytoplasm</location>
    </subcellularLocation>
</comment>
<comment type="similarity">
    <text evidence="2">Belongs to the TRAFAC class translation factor GTPase superfamily. Classic translation factor GTPase family. EF-Tu/EF-1A subfamily.</text>
</comment>
<organism>
    <name type="scientific">Corynebacterium efficiens (strain DSM 44549 / YS-314 / AJ 12310 / JCM 11189 / NBRC 100395)</name>
    <dbReference type="NCBI Taxonomy" id="196164"/>
    <lineage>
        <taxon>Bacteria</taxon>
        <taxon>Bacillati</taxon>
        <taxon>Actinomycetota</taxon>
        <taxon>Actinomycetes</taxon>
        <taxon>Mycobacteriales</taxon>
        <taxon>Corynebacteriaceae</taxon>
        <taxon>Corynebacterium</taxon>
    </lineage>
</organism>
<gene>
    <name evidence="2" type="primary">tuf</name>
    <name type="ordered locus">CE0517</name>
</gene>
<protein>
    <recommendedName>
        <fullName evidence="2">Elongation factor Tu</fullName>
        <shortName evidence="2">EF-Tu</shortName>
        <ecNumber evidence="2">3.6.5.3</ecNumber>
    </recommendedName>
</protein>